<name>CY24A_DICDI</name>
<keyword id="KW-1003">Cell membrane</keyword>
<keyword id="KW-0472">Membrane</keyword>
<keyword id="KW-1185">Reference proteome</keyword>
<keyword id="KW-0812">Transmembrane</keyword>
<keyword id="KW-1133">Transmembrane helix</keyword>
<comment type="function">
    <text evidence="1">Critical component of the membrane-bound oxidase of phagocytes that generates superoxide.</text>
</comment>
<comment type="subunit">
    <text evidence="1">Composed of a heavy chain and a light chain.</text>
</comment>
<comment type="subcellular location">
    <subcellularLocation>
        <location evidence="2">Cell membrane</location>
    </subcellularLocation>
    <text evidence="3">As unassembled monomer may localize to the endoplasmic reticulum.</text>
</comment>
<comment type="developmental stage">
    <text evidence="5">Expressed during vegetative stage. Expression decreases during development and disappears from 8 hours.</text>
</comment>
<comment type="disruption phenotype">
    <text evidence="5">Prevents formation of fruiting bodies.</text>
</comment>
<comment type="similarity">
    <text evidence="6">Belongs to the p22phox family.</text>
</comment>
<accession>Q867X6</accession>
<accession>Q55GP4</accession>
<evidence type="ECO:0000250" key="1"/>
<evidence type="ECO:0000250" key="2">
    <source>
        <dbReference type="UniProtKB" id="P13498"/>
    </source>
</evidence>
<evidence type="ECO:0000250" key="3">
    <source>
        <dbReference type="UniProtKB" id="Q61462"/>
    </source>
</evidence>
<evidence type="ECO:0000255" key="4"/>
<evidence type="ECO:0000269" key="5">
    <source>
    </source>
</evidence>
<evidence type="ECO:0000305" key="6"/>
<dbReference type="EMBL" id="AY221170">
    <property type="protein sequence ID" value="AAO62418.1"/>
    <property type="molecule type" value="mRNA"/>
</dbReference>
<dbReference type="EMBL" id="AY221171">
    <property type="protein sequence ID" value="AAO62419.1"/>
    <property type="molecule type" value="Genomic_DNA"/>
</dbReference>
<dbReference type="EMBL" id="AAFI02000003">
    <property type="protein sequence ID" value="EAL73183.1"/>
    <property type="molecule type" value="Genomic_DNA"/>
</dbReference>
<dbReference type="RefSeq" id="XP_647140.1">
    <property type="nucleotide sequence ID" value="XM_642048.1"/>
</dbReference>
<dbReference type="SMR" id="Q867X6"/>
<dbReference type="FunCoup" id="Q867X6">
    <property type="interactions" value="52"/>
</dbReference>
<dbReference type="STRING" id="44689.Q867X6"/>
<dbReference type="TCDB" id="5.B.1.1.12">
    <property type="family name" value="the phagocyte (gp91(phox)) nadph oxidase family"/>
</dbReference>
<dbReference type="PaxDb" id="44689-DDB0191314"/>
<dbReference type="EnsemblProtists" id="EAL73183">
    <property type="protein sequence ID" value="EAL73183"/>
    <property type="gene ID" value="DDB_G0267460"/>
</dbReference>
<dbReference type="GeneID" id="8615943"/>
<dbReference type="KEGG" id="ddi:DDB_G0267460"/>
<dbReference type="dictyBase" id="DDB_G0267460">
    <property type="gene designation" value="cybA"/>
</dbReference>
<dbReference type="VEuPathDB" id="AmoebaDB:DDB_G0267460"/>
<dbReference type="eggNOG" id="ENOG502RHUE">
    <property type="taxonomic scope" value="Eukaryota"/>
</dbReference>
<dbReference type="HOGENOM" id="CLU_2077485_0_0_1"/>
<dbReference type="InParanoid" id="Q867X6"/>
<dbReference type="OMA" id="MIGMAAC"/>
<dbReference type="PhylomeDB" id="Q867X6"/>
<dbReference type="PRO" id="PR:Q867X6"/>
<dbReference type="Proteomes" id="UP000002195">
    <property type="component" value="Chromosome 1"/>
</dbReference>
<dbReference type="GO" id="GO:0005886">
    <property type="term" value="C:plasma membrane"/>
    <property type="evidence" value="ECO:0007669"/>
    <property type="project" value="UniProtKB-SubCell"/>
</dbReference>
<dbReference type="GO" id="GO:0020037">
    <property type="term" value="F:heme binding"/>
    <property type="evidence" value="ECO:0007669"/>
    <property type="project" value="InterPro"/>
</dbReference>
<dbReference type="GO" id="GO:0045087">
    <property type="term" value="P:innate immune response"/>
    <property type="evidence" value="ECO:0000250"/>
    <property type="project" value="UniProtKB"/>
</dbReference>
<dbReference type="GO" id="GO:0030587">
    <property type="term" value="P:sorocarp development"/>
    <property type="evidence" value="ECO:0000315"/>
    <property type="project" value="dictyBase"/>
</dbReference>
<dbReference type="InterPro" id="IPR007732">
    <property type="entry name" value="Cyt_b558_asu"/>
</dbReference>
<dbReference type="PANTHER" id="PTHR15168">
    <property type="entry name" value="CYTOCHROME B-245 LIGHT CHAIN"/>
    <property type="match status" value="1"/>
</dbReference>
<dbReference type="PANTHER" id="PTHR15168:SF0">
    <property type="entry name" value="CYTOCHROME B-245 LIGHT CHAIN"/>
    <property type="match status" value="1"/>
</dbReference>
<dbReference type="Pfam" id="PF05038">
    <property type="entry name" value="Cytochrom_B558a"/>
    <property type="match status" value="1"/>
</dbReference>
<gene>
    <name type="primary">cybA</name>
    <name type="ORF">DDB_G0267460</name>
</gene>
<organism>
    <name type="scientific">Dictyostelium discoideum</name>
    <name type="common">Social amoeba</name>
    <dbReference type="NCBI Taxonomy" id="44689"/>
    <lineage>
        <taxon>Eukaryota</taxon>
        <taxon>Amoebozoa</taxon>
        <taxon>Evosea</taxon>
        <taxon>Eumycetozoa</taxon>
        <taxon>Dictyostelia</taxon>
        <taxon>Dictyosteliales</taxon>
        <taxon>Dictyosteliaceae</taxon>
        <taxon>Dictyostelium</taxon>
    </lineage>
</organism>
<feature type="chain" id="PRO_0000361530" description="Superoxide-generating NADPH oxidase light chain subunit">
    <location>
        <begin position="1"/>
        <end position="118"/>
    </location>
</feature>
<feature type="transmembrane region" description="Helical" evidence="4">
    <location>
        <begin position="9"/>
        <end position="29"/>
    </location>
</feature>
<feature type="transmembrane region" description="Helical" evidence="4">
    <location>
        <begin position="36"/>
        <end position="56"/>
    </location>
</feature>
<feature type="transmembrane region" description="Helical" evidence="4">
    <location>
        <begin position="62"/>
        <end position="82"/>
    </location>
</feature>
<feature type="transmembrane region" description="Helical" evidence="4">
    <location>
        <begin position="83"/>
        <end position="103"/>
    </location>
</feature>
<reference key="1">
    <citation type="journal article" date="2005" name="Biochim. Biophys. Acta">
        <title>NADPH oxidase homologs are required for normal cell differentiation and morphogenesis in Dictyostelium discoideum.</title>
        <authorList>
            <person name="Lardy B."/>
            <person name="Bof M."/>
            <person name="Aubry L."/>
            <person name="Paclet M.H."/>
            <person name="Morel F."/>
            <person name="Satre M."/>
            <person name="Klein G."/>
        </authorList>
    </citation>
    <scope>NUCLEOTIDE SEQUENCE [GENOMIC DNA]</scope>
    <scope>DEVELOPMENTAL STAGE</scope>
    <scope>DISRUPTION PHENOTYPE</scope>
</reference>
<reference key="2">
    <citation type="journal article" date="2005" name="Nature">
        <title>The genome of the social amoeba Dictyostelium discoideum.</title>
        <authorList>
            <person name="Eichinger L."/>
            <person name="Pachebat J.A."/>
            <person name="Gloeckner G."/>
            <person name="Rajandream M.A."/>
            <person name="Sucgang R."/>
            <person name="Berriman M."/>
            <person name="Song J."/>
            <person name="Olsen R."/>
            <person name="Szafranski K."/>
            <person name="Xu Q."/>
            <person name="Tunggal B."/>
            <person name="Kummerfeld S."/>
            <person name="Madera M."/>
            <person name="Konfortov B.A."/>
            <person name="Rivero F."/>
            <person name="Bankier A.T."/>
            <person name="Lehmann R."/>
            <person name="Hamlin N."/>
            <person name="Davies R."/>
            <person name="Gaudet P."/>
            <person name="Fey P."/>
            <person name="Pilcher K."/>
            <person name="Chen G."/>
            <person name="Saunders D."/>
            <person name="Sodergren E.J."/>
            <person name="Davis P."/>
            <person name="Kerhornou A."/>
            <person name="Nie X."/>
            <person name="Hall N."/>
            <person name="Anjard C."/>
            <person name="Hemphill L."/>
            <person name="Bason N."/>
            <person name="Farbrother P."/>
            <person name="Desany B."/>
            <person name="Just E."/>
            <person name="Morio T."/>
            <person name="Rost R."/>
            <person name="Churcher C.M."/>
            <person name="Cooper J."/>
            <person name="Haydock S."/>
            <person name="van Driessche N."/>
            <person name="Cronin A."/>
            <person name="Goodhead I."/>
            <person name="Muzny D.M."/>
            <person name="Mourier T."/>
            <person name="Pain A."/>
            <person name="Lu M."/>
            <person name="Harper D."/>
            <person name="Lindsay R."/>
            <person name="Hauser H."/>
            <person name="James K.D."/>
            <person name="Quiles M."/>
            <person name="Madan Babu M."/>
            <person name="Saito T."/>
            <person name="Buchrieser C."/>
            <person name="Wardroper A."/>
            <person name="Felder M."/>
            <person name="Thangavelu M."/>
            <person name="Johnson D."/>
            <person name="Knights A."/>
            <person name="Loulseged H."/>
            <person name="Mungall K.L."/>
            <person name="Oliver K."/>
            <person name="Price C."/>
            <person name="Quail M.A."/>
            <person name="Urushihara H."/>
            <person name="Hernandez J."/>
            <person name="Rabbinowitsch E."/>
            <person name="Steffen D."/>
            <person name="Sanders M."/>
            <person name="Ma J."/>
            <person name="Kohara Y."/>
            <person name="Sharp S."/>
            <person name="Simmonds M.N."/>
            <person name="Spiegler S."/>
            <person name="Tivey A."/>
            <person name="Sugano S."/>
            <person name="White B."/>
            <person name="Walker D."/>
            <person name="Woodward J.R."/>
            <person name="Winckler T."/>
            <person name="Tanaka Y."/>
            <person name="Shaulsky G."/>
            <person name="Schleicher M."/>
            <person name="Weinstock G.M."/>
            <person name="Rosenthal A."/>
            <person name="Cox E.C."/>
            <person name="Chisholm R.L."/>
            <person name="Gibbs R.A."/>
            <person name="Loomis W.F."/>
            <person name="Platzer M."/>
            <person name="Kay R.R."/>
            <person name="Williams J.G."/>
            <person name="Dear P.H."/>
            <person name="Noegel A.A."/>
            <person name="Barrell B.G."/>
            <person name="Kuspa A."/>
        </authorList>
    </citation>
    <scope>NUCLEOTIDE SEQUENCE [LARGE SCALE GENOMIC DNA]</scope>
    <source>
        <strain>AX4</strain>
    </source>
</reference>
<proteinExistence type="evidence at transcript level"/>
<protein>
    <recommendedName>
        <fullName>Superoxide-generating NADPH oxidase light chain subunit</fullName>
    </recommendedName>
    <alternativeName>
        <fullName>Cytochrome b-245 light chain</fullName>
    </alternativeName>
    <alternativeName>
        <fullName>p22-phox</fullName>
        <shortName>p22phox</shortName>
    </alternativeName>
</protein>
<sequence>MGKFKLGNWAAMIGMAACWCLIAGGIMGIWYERRYIAIYSICVGGVLYPLLYPLSFLGPLKAIFHQYYVAAALMAGLSVLCYFLVPTMLAAMVMDISAVVFLISAIKGERGDFFDKQD</sequence>